<sequence length="259" mass="28681">MIQIDALPAFSDNYIWLLQDTAKRRCAVVDPGDAGPVERWLAANPEWVLSDILVTHHHNDHVGGVERLRQLTGARVCGPANERIPGRDLALDEGDRVDVLGVTFQVLAVPGHTLGHIAFFSDQPATPILFSGDTLFAAGCGRMFEGTPEQMQPALARLAALPEQTAVYCAHEYTLSNLRFAKAVEPTNPHVQQRFEDVSRLRAENRISLPSTIGLERLTNPFLRTSETLVKQKADEWKGHSNTTHVAVFAALRSWKDTF</sequence>
<accession>A5W167</accession>
<reference key="1">
    <citation type="submission" date="2007-05" db="EMBL/GenBank/DDBJ databases">
        <title>Complete sequence of Pseudomonas putida F1.</title>
        <authorList>
            <consortium name="US DOE Joint Genome Institute"/>
            <person name="Copeland A."/>
            <person name="Lucas S."/>
            <person name="Lapidus A."/>
            <person name="Barry K."/>
            <person name="Detter J.C."/>
            <person name="Glavina del Rio T."/>
            <person name="Hammon N."/>
            <person name="Israni S."/>
            <person name="Dalin E."/>
            <person name="Tice H."/>
            <person name="Pitluck S."/>
            <person name="Chain P."/>
            <person name="Malfatti S."/>
            <person name="Shin M."/>
            <person name="Vergez L."/>
            <person name="Schmutz J."/>
            <person name="Larimer F."/>
            <person name="Land M."/>
            <person name="Hauser L."/>
            <person name="Kyrpides N."/>
            <person name="Lykidis A."/>
            <person name="Parales R."/>
            <person name="Richardson P."/>
        </authorList>
    </citation>
    <scope>NUCLEOTIDE SEQUENCE [LARGE SCALE GENOMIC DNA]</scope>
    <source>
        <strain>ATCC 700007 / DSM 6899 / JCM 31910 / BCRC 17059 / LMG 24140 / F1</strain>
    </source>
</reference>
<comment type="function">
    <text evidence="1">Thiolesterase that catalyzes the hydrolysis of S-D-lactoyl-glutathione to form glutathione and D-lactic acid.</text>
</comment>
<comment type="catalytic activity">
    <reaction evidence="1">
        <text>an S-(2-hydroxyacyl)glutathione + H2O = a 2-hydroxy carboxylate + glutathione + H(+)</text>
        <dbReference type="Rhea" id="RHEA:21864"/>
        <dbReference type="ChEBI" id="CHEBI:15377"/>
        <dbReference type="ChEBI" id="CHEBI:15378"/>
        <dbReference type="ChEBI" id="CHEBI:57925"/>
        <dbReference type="ChEBI" id="CHEBI:58896"/>
        <dbReference type="ChEBI" id="CHEBI:71261"/>
        <dbReference type="EC" id="3.1.2.6"/>
    </reaction>
</comment>
<comment type="cofactor">
    <cofactor evidence="1">
        <name>Zn(2+)</name>
        <dbReference type="ChEBI" id="CHEBI:29105"/>
    </cofactor>
    <text evidence="1">Binds 2 Zn(2+) ions per subunit.</text>
</comment>
<comment type="pathway">
    <text evidence="1">Secondary metabolite metabolism; methylglyoxal degradation; (R)-lactate from methylglyoxal: step 2/2.</text>
</comment>
<comment type="subunit">
    <text evidence="1">Monomer.</text>
</comment>
<comment type="similarity">
    <text evidence="1">Belongs to the metallo-beta-lactamase superfamily. Glyoxalase II family.</text>
</comment>
<proteinExistence type="inferred from homology"/>
<keyword id="KW-0378">Hydrolase</keyword>
<keyword id="KW-0479">Metal-binding</keyword>
<keyword id="KW-0862">Zinc</keyword>
<evidence type="ECO:0000255" key="1">
    <source>
        <dbReference type="HAMAP-Rule" id="MF_01374"/>
    </source>
</evidence>
<feature type="chain" id="PRO_1000144785" description="Hydroxyacylglutathione hydrolase">
    <location>
        <begin position="1"/>
        <end position="259"/>
    </location>
</feature>
<feature type="binding site" evidence="1">
    <location>
        <position position="56"/>
    </location>
    <ligand>
        <name>Zn(2+)</name>
        <dbReference type="ChEBI" id="CHEBI:29105"/>
        <label>1</label>
    </ligand>
</feature>
<feature type="binding site" evidence="1">
    <location>
        <position position="58"/>
    </location>
    <ligand>
        <name>Zn(2+)</name>
        <dbReference type="ChEBI" id="CHEBI:29105"/>
        <label>1</label>
    </ligand>
</feature>
<feature type="binding site" evidence="1">
    <location>
        <position position="60"/>
    </location>
    <ligand>
        <name>Zn(2+)</name>
        <dbReference type="ChEBI" id="CHEBI:29105"/>
        <label>2</label>
    </ligand>
</feature>
<feature type="binding site" evidence="1">
    <location>
        <position position="61"/>
    </location>
    <ligand>
        <name>Zn(2+)</name>
        <dbReference type="ChEBI" id="CHEBI:29105"/>
        <label>2</label>
    </ligand>
</feature>
<feature type="binding site" evidence="1">
    <location>
        <position position="112"/>
    </location>
    <ligand>
        <name>Zn(2+)</name>
        <dbReference type="ChEBI" id="CHEBI:29105"/>
        <label>1</label>
    </ligand>
</feature>
<feature type="binding site" evidence="1">
    <location>
        <position position="133"/>
    </location>
    <ligand>
        <name>Zn(2+)</name>
        <dbReference type="ChEBI" id="CHEBI:29105"/>
        <label>1</label>
    </ligand>
</feature>
<feature type="binding site" evidence="1">
    <location>
        <position position="133"/>
    </location>
    <ligand>
        <name>Zn(2+)</name>
        <dbReference type="ChEBI" id="CHEBI:29105"/>
        <label>2</label>
    </ligand>
</feature>
<feature type="binding site" evidence="1">
    <location>
        <position position="171"/>
    </location>
    <ligand>
        <name>Zn(2+)</name>
        <dbReference type="ChEBI" id="CHEBI:29105"/>
        <label>2</label>
    </ligand>
</feature>
<name>GLO2_PSEP1</name>
<organism>
    <name type="scientific">Pseudomonas putida (strain ATCC 700007 / DSM 6899 / JCM 31910 / BCRC 17059 / LMG 24140 / F1)</name>
    <dbReference type="NCBI Taxonomy" id="351746"/>
    <lineage>
        <taxon>Bacteria</taxon>
        <taxon>Pseudomonadati</taxon>
        <taxon>Pseudomonadota</taxon>
        <taxon>Gammaproteobacteria</taxon>
        <taxon>Pseudomonadales</taxon>
        <taxon>Pseudomonadaceae</taxon>
        <taxon>Pseudomonas</taxon>
    </lineage>
</organism>
<protein>
    <recommendedName>
        <fullName evidence="1">Hydroxyacylglutathione hydrolase</fullName>
        <ecNumber evidence="1">3.1.2.6</ecNumber>
    </recommendedName>
    <alternativeName>
        <fullName evidence="1">Glyoxalase II</fullName>
        <shortName evidence="1">Glx II</shortName>
    </alternativeName>
</protein>
<gene>
    <name evidence="1" type="primary">gloB</name>
    <name type="ordered locus">Pput_1721</name>
</gene>
<dbReference type="EC" id="3.1.2.6" evidence="1"/>
<dbReference type="EMBL" id="CP000712">
    <property type="protein sequence ID" value="ABQ77877.1"/>
    <property type="molecule type" value="Genomic_DNA"/>
</dbReference>
<dbReference type="SMR" id="A5W167"/>
<dbReference type="KEGG" id="ppf:Pput_1721"/>
<dbReference type="eggNOG" id="COG0491">
    <property type="taxonomic scope" value="Bacteria"/>
</dbReference>
<dbReference type="HOGENOM" id="CLU_030571_4_1_6"/>
<dbReference type="UniPathway" id="UPA00619">
    <property type="reaction ID" value="UER00676"/>
</dbReference>
<dbReference type="GO" id="GO:0004416">
    <property type="term" value="F:hydroxyacylglutathione hydrolase activity"/>
    <property type="evidence" value="ECO:0007669"/>
    <property type="project" value="UniProtKB-UniRule"/>
</dbReference>
<dbReference type="GO" id="GO:0046872">
    <property type="term" value="F:metal ion binding"/>
    <property type="evidence" value="ECO:0007669"/>
    <property type="project" value="UniProtKB-KW"/>
</dbReference>
<dbReference type="GO" id="GO:0019243">
    <property type="term" value="P:methylglyoxal catabolic process to D-lactate via S-lactoyl-glutathione"/>
    <property type="evidence" value="ECO:0007669"/>
    <property type="project" value="InterPro"/>
</dbReference>
<dbReference type="CDD" id="cd07723">
    <property type="entry name" value="hydroxyacylglutathione_hydrolase_MBL-fold"/>
    <property type="match status" value="1"/>
</dbReference>
<dbReference type="Gene3D" id="3.60.15.10">
    <property type="entry name" value="Ribonuclease Z/Hydroxyacylglutathione hydrolase-like"/>
    <property type="match status" value="1"/>
</dbReference>
<dbReference type="HAMAP" id="MF_01374">
    <property type="entry name" value="Glyoxalase_2"/>
    <property type="match status" value="1"/>
</dbReference>
<dbReference type="InterPro" id="IPR035680">
    <property type="entry name" value="Clx_II_MBL"/>
</dbReference>
<dbReference type="InterPro" id="IPR050110">
    <property type="entry name" value="Glyoxalase_II_hydrolase"/>
</dbReference>
<dbReference type="InterPro" id="IPR032282">
    <property type="entry name" value="HAGH_C"/>
</dbReference>
<dbReference type="InterPro" id="IPR017782">
    <property type="entry name" value="Hydroxyacylglutathione_Hdrlase"/>
</dbReference>
<dbReference type="InterPro" id="IPR001279">
    <property type="entry name" value="Metallo-B-lactamas"/>
</dbReference>
<dbReference type="InterPro" id="IPR036866">
    <property type="entry name" value="RibonucZ/Hydroxyglut_hydro"/>
</dbReference>
<dbReference type="NCBIfam" id="TIGR03413">
    <property type="entry name" value="GSH_gloB"/>
    <property type="match status" value="1"/>
</dbReference>
<dbReference type="PANTHER" id="PTHR43705">
    <property type="entry name" value="HYDROXYACYLGLUTATHIONE HYDROLASE"/>
    <property type="match status" value="1"/>
</dbReference>
<dbReference type="PANTHER" id="PTHR43705:SF1">
    <property type="entry name" value="HYDROXYACYLGLUTATHIONE HYDROLASE GLOB"/>
    <property type="match status" value="1"/>
</dbReference>
<dbReference type="Pfam" id="PF16123">
    <property type="entry name" value="HAGH_C"/>
    <property type="match status" value="1"/>
</dbReference>
<dbReference type="Pfam" id="PF00753">
    <property type="entry name" value="Lactamase_B"/>
    <property type="match status" value="1"/>
</dbReference>
<dbReference type="PIRSF" id="PIRSF005457">
    <property type="entry name" value="Glx"/>
    <property type="match status" value="1"/>
</dbReference>
<dbReference type="SMART" id="SM00849">
    <property type="entry name" value="Lactamase_B"/>
    <property type="match status" value="1"/>
</dbReference>
<dbReference type="SUPFAM" id="SSF56281">
    <property type="entry name" value="Metallo-hydrolase/oxidoreductase"/>
    <property type="match status" value="1"/>
</dbReference>